<feature type="chain" id="PRO_0000057687" description="Beta-xylosidase">
    <location>
        <begin position="1"/>
        <end position="504"/>
    </location>
</feature>
<feature type="active site" description="Proton donor" evidence="2">
    <location>
        <position position="160"/>
    </location>
</feature>
<feature type="active site" description="Nucleophile" evidence="1">
    <location>
        <position position="280"/>
    </location>
</feature>
<feature type="strand" evidence="5">
    <location>
        <begin position="3"/>
        <end position="5"/>
    </location>
</feature>
<feature type="strand" evidence="4">
    <location>
        <begin position="11"/>
        <end position="13"/>
    </location>
</feature>
<feature type="helix" evidence="4">
    <location>
        <begin position="17"/>
        <end position="19"/>
    </location>
</feature>
<feature type="strand" evidence="4">
    <location>
        <begin position="20"/>
        <end position="23"/>
    </location>
</feature>
<feature type="helix" evidence="4">
    <location>
        <begin position="27"/>
        <end position="31"/>
    </location>
</feature>
<feature type="helix" evidence="4">
    <location>
        <begin position="33"/>
        <end position="45"/>
    </location>
</feature>
<feature type="strand" evidence="4">
    <location>
        <begin position="49"/>
        <end position="52"/>
    </location>
</feature>
<feature type="strand" evidence="5">
    <location>
        <begin position="56"/>
        <end position="58"/>
    </location>
</feature>
<feature type="turn" evidence="4">
    <location>
        <begin position="59"/>
        <end position="61"/>
    </location>
</feature>
<feature type="strand" evidence="4">
    <location>
        <begin position="64"/>
        <end position="77"/>
    </location>
</feature>
<feature type="helix" evidence="4">
    <location>
        <begin position="80"/>
        <end position="91"/>
    </location>
</feature>
<feature type="strand" evidence="4">
    <location>
        <begin position="95"/>
        <end position="100"/>
    </location>
</feature>
<feature type="helix" evidence="4">
    <location>
        <begin position="105"/>
        <end position="107"/>
    </location>
</feature>
<feature type="strand" evidence="4">
    <location>
        <begin position="108"/>
        <end position="110"/>
    </location>
</feature>
<feature type="turn" evidence="4">
    <location>
        <begin position="115"/>
        <end position="118"/>
    </location>
</feature>
<feature type="helix" evidence="4">
    <location>
        <begin position="127"/>
        <end position="145"/>
    </location>
</feature>
<feature type="helix" evidence="4">
    <location>
        <begin position="147"/>
        <end position="151"/>
    </location>
</feature>
<feature type="strand" evidence="4">
    <location>
        <begin position="153"/>
        <end position="157"/>
    </location>
</feature>
<feature type="turn" evidence="4">
    <location>
        <begin position="164"/>
        <end position="166"/>
    </location>
</feature>
<feature type="helix" evidence="4">
    <location>
        <begin position="168"/>
        <end position="170"/>
    </location>
</feature>
<feature type="helix" evidence="4">
    <location>
        <begin position="172"/>
        <end position="189"/>
    </location>
</feature>
<feature type="strand" evidence="4">
    <location>
        <begin position="194"/>
        <end position="200"/>
    </location>
</feature>
<feature type="helix" evidence="4">
    <location>
        <begin position="206"/>
        <end position="217"/>
    </location>
</feature>
<feature type="strand" evidence="4">
    <location>
        <begin position="224"/>
        <end position="230"/>
    </location>
</feature>
<feature type="strand" evidence="4">
    <location>
        <begin position="236"/>
        <end position="238"/>
    </location>
</feature>
<feature type="helix" evidence="4">
    <location>
        <begin position="252"/>
        <end position="267"/>
    </location>
</feature>
<feature type="strand" evidence="4">
    <location>
        <begin position="269"/>
        <end position="271"/>
    </location>
</feature>
<feature type="strand" evidence="4">
    <location>
        <begin position="276"/>
        <end position="283"/>
    </location>
</feature>
<feature type="helix" evidence="4">
    <location>
        <begin position="290"/>
        <end position="293"/>
    </location>
</feature>
<feature type="helix" evidence="4">
    <location>
        <begin position="295"/>
        <end position="307"/>
    </location>
</feature>
<feature type="helix" evidence="4">
    <location>
        <begin position="308"/>
        <end position="310"/>
    </location>
</feature>
<feature type="strand" evidence="4">
    <location>
        <begin position="313"/>
        <end position="318"/>
    </location>
</feature>
<feature type="strand" evidence="4">
    <location>
        <begin position="320"/>
        <end position="322"/>
    </location>
</feature>
<feature type="strand" evidence="4">
    <location>
        <begin position="331"/>
        <end position="336"/>
    </location>
</feature>
<feature type="strand" evidence="4">
    <location>
        <begin position="340"/>
        <end position="342"/>
    </location>
</feature>
<feature type="helix" evidence="4">
    <location>
        <begin position="343"/>
        <end position="345"/>
    </location>
</feature>
<feature type="helix" evidence="4">
    <location>
        <begin position="349"/>
        <end position="358"/>
    </location>
</feature>
<feature type="strand" evidence="4">
    <location>
        <begin position="362"/>
        <end position="368"/>
    </location>
</feature>
<feature type="strand" evidence="4">
    <location>
        <begin position="371"/>
        <end position="375"/>
    </location>
</feature>
<feature type="strand" evidence="4">
    <location>
        <begin position="381"/>
        <end position="386"/>
    </location>
</feature>
<feature type="strand" evidence="4">
    <location>
        <begin position="398"/>
        <end position="405"/>
    </location>
</feature>
<feature type="strand" evidence="4">
    <location>
        <begin position="407"/>
        <end position="423"/>
    </location>
</feature>
<feature type="helix" evidence="4">
    <location>
        <begin position="425"/>
        <end position="431"/>
    </location>
</feature>
<feature type="helix" evidence="4">
    <location>
        <begin position="440"/>
        <end position="448"/>
    </location>
</feature>
<feature type="strand" evidence="4">
    <location>
        <begin position="452"/>
        <end position="459"/>
    </location>
</feature>
<feature type="helix" evidence="4">
    <location>
        <begin position="461"/>
        <end position="463"/>
    </location>
</feature>
<feature type="strand" evidence="4">
    <location>
        <begin position="464"/>
        <end position="471"/>
    </location>
</feature>
<feature type="strand" evidence="4">
    <location>
        <begin position="476"/>
        <end position="483"/>
    </location>
</feature>
<feature type="helix" evidence="4">
    <location>
        <begin position="488"/>
        <end position="490"/>
    </location>
</feature>
<feature type="helix" evidence="4">
    <location>
        <begin position="496"/>
        <end position="498"/>
    </location>
</feature>
<comment type="catalytic activity">
    <reaction>
        <text>Hydrolysis of (1-&gt;4)-beta-D-xylans, to remove successive D-xylose residues from the non-reducing termini.</text>
        <dbReference type="EC" id="3.2.1.37"/>
    </reaction>
</comment>
<comment type="similarity">
    <text evidence="3">Belongs to the glycosyl hydrolase 39 family.</text>
</comment>
<evidence type="ECO:0000250" key="1"/>
<evidence type="ECO:0000255" key="2">
    <source>
        <dbReference type="PROSITE-ProRule" id="PRU10068"/>
    </source>
</evidence>
<evidence type="ECO:0000305" key="3"/>
<evidence type="ECO:0007829" key="4">
    <source>
        <dbReference type="PDB" id="1W91"/>
    </source>
</evidence>
<evidence type="ECO:0007829" key="5">
    <source>
        <dbReference type="PDB" id="2BS9"/>
    </source>
</evidence>
<keyword id="KW-0002">3D-structure</keyword>
<keyword id="KW-0119">Carbohydrate metabolism</keyword>
<keyword id="KW-0326">Glycosidase</keyword>
<keyword id="KW-0378">Hydrolase</keyword>
<keyword id="KW-0624">Polysaccharide degradation</keyword>
<keyword id="KW-0858">Xylan degradation</keyword>
<protein>
    <recommendedName>
        <fullName>Beta-xylosidase</fullName>
        <ecNumber>3.2.1.37</ecNumber>
    </recommendedName>
    <alternativeName>
        <fullName>1,4-beta-D-xylan xylohydrolase</fullName>
    </alternativeName>
    <alternativeName>
        <fullName>Xylan 1,4-beta-xylosidase</fullName>
    </alternativeName>
</protein>
<sequence>MKVVNVPSNGREKFKKNWKFCVGTGRLGLALQKEYLDHLKLVQEKIGFRYIRGHGLLSDDVGIYREVEIDGEMKPFYNFTYIDRIVDSYLALNIRPFIEFGFMPKALASGDQTVFYWKGNVTPPKDYNKWRDLIVAVVSHFIERYGIEEVRTWLFEVWNEPNLVNFWKDANKQEYFKLYEVTARAVKSVDPHLQVGGPAICGGSDEWITDFLHFCAERRVPVDFVSRHAYTSKAPHKKTFEYYYQELELEPPEDMLEQFKTVRALIRQSPFPHLPLHITEYNTSYSPINPVHDTALNAAYIARILSEGGDYVDSFSYWTFSDVFEEMDVPKALFHGGFGLVALHSIPKPTFHAFTFFNALGDELLYRDGEMIVTRRKDGSIAAVLWNLVMEKGEGLTKEVQLVIPVSFSAVFIKRQIVNEQYGNAWRVWKQMGRPRFPSRQAVETLPSAQPHVMTEQRRATDGVIHLSIVLSKNEVTLIEIEQVRDETSTYVGLDDGEITSYSS</sequence>
<accession>Q9ZFM2</accession>
<accession>Q09LY4</accession>
<reference key="1">
    <citation type="journal article" date="1999" name="J. Bacteriol.">
        <title>The glucuronic acid utilization gene cluster from Bacillus stearothermophilus T-6.</title>
        <authorList>
            <person name="Shulami S."/>
            <person name="Gat O."/>
            <person name="Sonenshein A.L."/>
            <person name="Shoham Y."/>
        </authorList>
    </citation>
    <scope>NUCLEOTIDE SEQUENCE [GENOMIC DNA]</scope>
    <source>
        <strain>T-6</strain>
    </source>
</reference>
<organism>
    <name type="scientific">Geobacillus stearothermophilus</name>
    <name type="common">Bacillus stearothermophilus</name>
    <dbReference type="NCBI Taxonomy" id="1422"/>
    <lineage>
        <taxon>Bacteria</taxon>
        <taxon>Bacillati</taxon>
        <taxon>Bacillota</taxon>
        <taxon>Bacilli</taxon>
        <taxon>Bacillales</taxon>
        <taxon>Anoxybacillaceae</taxon>
        <taxon>Geobacillus</taxon>
    </lineage>
</organism>
<gene>
    <name type="primary">xynB</name>
</gene>
<name>XYNB_GEOSE</name>
<proteinExistence type="evidence at protein level"/>
<dbReference type="EC" id="3.2.1.37"/>
<dbReference type="EMBL" id="DQ868502">
    <property type="protein sequence ID" value="ABI49941.1"/>
    <property type="molecule type" value="Genomic_DNA"/>
</dbReference>
<dbReference type="PDB" id="1W91">
    <property type="method" value="X-ray"/>
    <property type="resolution" value="2.20 A"/>
    <property type="chains" value="A/B/C/D/E/F/G/H=1-504"/>
</dbReference>
<dbReference type="PDB" id="2BFG">
    <property type="method" value="X-ray"/>
    <property type="resolution" value="2.40 A"/>
    <property type="chains" value="A/B/C/D/E/F/G/H=1-504"/>
</dbReference>
<dbReference type="PDB" id="2BS9">
    <property type="method" value="X-ray"/>
    <property type="resolution" value="2.20 A"/>
    <property type="chains" value="A/B/C/D/E/F/G/H=1-504"/>
</dbReference>
<dbReference type="PDBsum" id="1W91"/>
<dbReference type="PDBsum" id="2BFG"/>
<dbReference type="PDBsum" id="2BS9"/>
<dbReference type="SMR" id="Q9ZFM2"/>
<dbReference type="CAZy" id="GH39">
    <property type="family name" value="Glycoside Hydrolase Family 39"/>
</dbReference>
<dbReference type="BRENDA" id="3.2.1.37">
    <property type="organism ID" value="623"/>
</dbReference>
<dbReference type="SABIO-RK" id="Q9ZFM2"/>
<dbReference type="EvolutionaryTrace" id="Q9ZFM2"/>
<dbReference type="GO" id="GO:0009044">
    <property type="term" value="F:xylan 1,4-beta-xylosidase activity"/>
    <property type="evidence" value="ECO:0007669"/>
    <property type="project" value="UniProtKB-EC"/>
</dbReference>
<dbReference type="GO" id="GO:0045493">
    <property type="term" value="P:xylan catabolic process"/>
    <property type="evidence" value="ECO:0007669"/>
    <property type="project" value="UniProtKB-KW"/>
</dbReference>
<dbReference type="Gene3D" id="3.20.20.80">
    <property type="entry name" value="Glycosidases"/>
    <property type="match status" value="1"/>
</dbReference>
<dbReference type="Gene3D" id="2.60.40.1500">
    <property type="entry name" value="Glycosyl hydrolase domain, family 39"/>
    <property type="match status" value="1"/>
</dbReference>
<dbReference type="InterPro" id="IPR049165">
    <property type="entry name" value="GH39_as"/>
</dbReference>
<dbReference type="InterPro" id="IPR049166">
    <property type="entry name" value="GH39_cat"/>
</dbReference>
<dbReference type="InterPro" id="IPR000514">
    <property type="entry name" value="Glyco_hydro_39"/>
</dbReference>
<dbReference type="InterPro" id="IPR017853">
    <property type="entry name" value="Glycoside_hydrolase_SF"/>
</dbReference>
<dbReference type="InterPro" id="IPR051923">
    <property type="entry name" value="Glycosyl_Hydrolase_39"/>
</dbReference>
<dbReference type="PANTHER" id="PTHR12631">
    <property type="entry name" value="ALPHA-L-IDURONIDASE"/>
    <property type="match status" value="1"/>
</dbReference>
<dbReference type="PANTHER" id="PTHR12631:SF10">
    <property type="entry name" value="BETA-XYLOSIDASE-LIKE PROTEIN-RELATED"/>
    <property type="match status" value="1"/>
</dbReference>
<dbReference type="Pfam" id="PF01229">
    <property type="entry name" value="Glyco_hydro_39"/>
    <property type="match status" value="1"/>
</dbReference>
<dbReference type="PRINTS" id="PR00745">
    <property type="entry name" value="GLHYDRLASE39"/>
</dbReference>
<dbReference type="SUPFAM" id="SSF51445">
    <property type="entry name" value="(Trans)glycosidases"/>
    <property type="match status" value="1"/>
</dbReference>
<dbReference type="SUPFAM" id="SSF51011">
    <property type="entry name" value="Glycosyl hydrolase domain"/>
    <property type="match status" value="1"/>
</dbReference>
<dbReference type="PROSITE" id="PS01027">
    <property type="entry name" value="GLYCOSYL_HYDROL_F39"/>
    <property type="match status" value="1"/>
</dbReference>